<evidence type="ECO:0000255" key="1">
    <source>
        <dbReference type="HAMAP-Rule" id="MF_01393"/>
    </source>
</evidence>
<sequence length="242" mass="27630">MDHKSPLVSWNLFGFDIVFNLSSILMILVTAFLVFLLAIICTRNLKKRPTGKQNFVEWIFDFVRGIIEGNMAWKKGGQFHFLAVTLILYIFIANMLGLPFSIVTKDHTLWWKSPTADATVTLTLSTTIILLTHFYGIKMRGTKQYLKGYVQPFWPLAIINVFEEFTSTLTLGLRLYGNIFAGEILLTLLAGLFFNEPAWGWIISIPGLIVWQAFSIFVGTIQAYIFIMLSMVYMSHKVADEH</sequence>
<comment type="function">
    <text evidence="1">Key component of the proton channel; it plays a direct role in the translocation of protons across the membrane.</text>
</comment>
<comment type="subunit">
    <text evidence="1">F-type ATPases have 2 components, CF(1) - the catalytic core - and CF(0) - the membrane proton channel. CF(1) has five subunits: alpha(3), beta(3), gamma(1), delta(1), epsilon(1). CF(0) has three main subunits: a(1), b(2) and c(9-12). The alpha and beta chains form an alternating ring which encloses part of the gamma chain. CF(1) is attached to CF(0) by a central stalk formed by the gamma and epsilon chains, while a peripheral stalk is formed by the delta and b chains.</text>
</comment>
<comment type="subcellular location">
    <subcellularLocation>
        <location evidence="1">Cell membrane</location>
        <topology evidence="1">Multi-pass membrane protein</topology>
    </subcellularLocation>
</comment>
<comment type="similarity">
    <text evidence="1">Belongs to the ATPase A chain family.</text>
</comment>
<reference key="1">
    <citation type="journal article" date="2008" name="Antimicrob. Agents Chemother.">
        <title>Mutated response regulator graR is responsible for phenotypic conversion of Staphylococcus aureus from heterogeneous vancomycin-intermediate resistance to vancomycin-intermediate resistance.</title>
        <authorList>
            <person name="Neoh H.-M."/>
            <person name="Cui L."/>
            <person name="Yuzawa H."/>
            <person name="Takeuchi F."/>
            <person name="Matsuo M."/>
            <person name="Hiramatsu K."/>
        </authorList>
    </citation>
    <scope>NUCLEOTIDE SEQUENCE [LARGE SCALE GENOMIC DNA]</scope>
    <source>
        <strain>Mu3 / ATCC 700698</strain>
    </source>
</reference>
<gene>
    <name evidence="1" type="primary">atpB</name>
    <name type="ordered locus">SAHV_2093</name>
</gene>
<feature type="chain" id="PRO_1000145304" description="ATP synthase subunit a">
    <location>
        <begin position="1"/>
        <end position="242"/>
    </location>
</feature>
<feature type="transmembrane region" description="Helical" evidence="1">
    <location>
        <begin position="21"/>
        <end position="41"/>
    </location>
</feature>
<feature type="transmembrane region" description="Helical" evidence="1">
    <location>
        <begin position="83"/>
        <end position="103"/>
    </location>
</feature>
<feature type="transmembrane region" description="Helical" evidence="1">
    <location>
        <begin position="117"/>
        <end position="137"/>
    </location>
</feature>
<feature type="transmembrane region" description="Helical" evidence="1">
    <location>
        <begin position="175"/>
        <end position="195"/>
    </location>
</feature>
<feature type="transmembrane region" description="Helical" evidence="1">
    <location>
        <begin position="198"/>
        <end position="218"/>
    </location>
</feature>
<accession>A7X4V1</accession>
<protein>
    <recommendedName>
        <fullName evidence="1">ATP synthase subunit a</fullName>
    </recommendedName>
    <alternativeName>
        <fullName evidence="1">ATP synthase F0 sector subunit a</fullName>
    </alternativeName>
    <alternativeName>
        <fullName evidence="1">F-ATPase subunit 6</fullName>
    </alternativeName>
</protein>
<name>ATP6_STAA1</name>
<keyword id="KW-0066">ATP synthesis</keyword>
<keyword id="KW-1003">Cell membrane</keyword>
<keyword id="KW-0138">CF(0)</keyword>
<keyword id="KW-0375">Hydrogen ion transport</keyword>
<keyword id="KW-0406">Ion transport</keyword>
<keyword id="KW-0472">Membrane</keyword>
<keyword id="KW-0812">Transmembrane</keyword>
<keyword id="KW-1133">Transmembrane helix</keyword>
<keyword id="KW-0813">Transport</keyword>
<proteinExistence type="inferred from homology"/>
<organism>
    <name type="scientific">Staphylococcus aureus (strain Mu3 / ATCC 700698)</name>
    <dbReference type="NCBI Taxonomy" id="418127"/>
    <lineage>
        <taxon>Bacteria</taxon>
        <taxon>Bacillati</taxon>
        <taxon>Bacillota</taxon>
        <taxon>Bacilli</taxon>
        <taxon>Bacillales</taxon>
        <taxon>Staphylococcaceae</taxon>
        <taxon>Staphylococcus</taxon>
    </lineage>
</organism>
<dbReference type="EMBL" id="AP009324">
    <property type="protein sequence ID" value="BAF78976.1"/>
    <property type="molecule type" value="Genomic_DNA"/>
</dbReference>
<dbReference type="RefSeq" id="WP_000349655.1">
    <property type="nucleotide sequence ID" value="NZ_CTYB01000015.1"/>
</dbReference>
<dbReference type="SMR" id="A7X4V1"/>
<dbReference type="KEGG" id="saw:SAHV_2093"/>
<dbReference type="HOGENOM" id="CLU_041018_2_3_9"/>
<dbReference type="GO" id="GO:0005886">
    <property type="term" value="C:plasma membrane"/>
    <property type="evidence" value="ECO:0007669"/>
    <property type="project" value="UniProtKB-SubCell"/>
</dbReference>
<dbReference type="GO" id="GO:0045259">
    <property type="term" value="C:proton-transporting ATP synthase complex"/>
    <property type="evidence" value="ECO:0007669"/>
    <property type="project" value="UniProtKB-KW"/>
</dbReference>
<dbReference type="GO" id="GO:0046933">
    <property type="term" value="F:proton-transporting ATP synthase activity, rotational mechanism"/>
    <property type="evidence" value="ECO:0007669"/>
    <property type="project" value="UniProtKB-UniRule"/>
</dbReference>
<dbReference type="GO" id="GO:0042777">
    <property type="term" value="P:proton motive force-driven plasma membrane ATP synthesis"/>
    <property type="evidence" value="ECO:0007669"/>
    <property type="project" value="TreeGrafter"/>
</dbReference>
<dbReference type="CDD" id="cd00310">
    <property type="entry name" value="ATP-synt_Fo_a_6"/>
    <property type="match status" value="1"/>
</dbReference>
<dbReference type="FunFam" id="1.20.120.220:FF:000005">
    <property type="entry name" value="ATP synthase subunit a"/>
    <property type="match status" value="1"/>
</dbReference>
<dbReference type="Gene3D" id="1.20.120.220">
    <property type="entry name" value="ATP synthase, F0 complex, subunit A"/>
    <property type="match status" value="1"/>
</dbReference>
<dbReference type="HAMAP" id="MF_01393">
    <property type="entry name" value="ATP_synth_a_bact"/>
    <property type="match status" value="1"/>
</dbReference>
<dbReference type="InterPro" id="IPR045082">
    <property type="entry name" value="ATP_syn_F0_a_bact/chloroplast"/>
</dbReference>
<dbReference type="InterPro" id="IPR000568">
    <property type="entry name" value="ATP_synth_F0_asu"/>
</dbReference>
<dbReference type="InterPro" id="IPR023011">
    <property type="entry name" value="ATP_synth_F0_asu_AS"/>
</dbReference>
<dbReference type="InterPro" id="IPR035908">
    <property type="entry name" value="F0_ATP_A_sf"/>
</dbReference>
<dbReference type="NCBIfam" id="TIGR01131">
    <property type="entry name" value="ATP_synt_6_or_A"/>
    <property type="match status" value="1"/>
</dbReference>
<dbReference type="NCBIfam" id="NF004479">
    <property type="entry name" value="PRK05815.1-4"/>
    <property type="match status" value="1"/>
</dbReference>
<dbReference type="PANTHER" id="PTHR42823">
    <property type="entry name" value="ATP SYNTHASE SUBUNIT A, CHLOROPLASTIC"/>
    <property type="match status" value="1"/>
</dbReference>
<dbReference type="PANTHER" id="PTHR42823:SF3">
    <property type="entry name" value="ATP SYNTHASE SUBUNIT A, CHLOROPLASTIC"/>
    <property type="match status" value="1"/>
</dbReference>
<dbReference type="Pfam" id="PF00119">
    <property type="entry name" value="ATP-synt_A"/>
    <property type="match status" value="1"/>
</dbReference>
<dbReference type="PRINTS" id="PR00123">
    <property type="entry name" value="ATPASEA"/>
</dbReference>
<dbReference type="SUPFAM" id="SSF81336">
    <property type="entry name" value="F1F0 ATP synthase subunit A"/>
    <property type="match status" value="1"/>
</dbReference>
<dbReference type="PROSITE" id="PS00449">
    <property type="entry name" value="ATPASE_A"/>
    <property type="match status" value="1"/>
</dbReference>